<comment type="function">
    <text evidence="1">Involved in pre-mRNA splicing.</text>
</comment>
<comment type="subunit">
    <text evidence="1">Associated with the spliceosome.</text>
</comment>
<comment type="subcellular location">
    <subcellularLocation>
        <location evidence="1">Nucleus</location>
    </subcellularLocation>
</comment>
<organism>
    <name type="scientific">Eremothecium gossypii (strain ATCC 10895 / CBS 109.51 / FGSC 9923 / NRRL Y-1056)</name>
    <name type="common">Yeast</name>
    <name type="synonym">Ashbya gossypii</name>
    <dbReference type="NCBI Taxonomy" id="284811"/>
    <lineage>
        <taxon>Eukaryota</taxon>
        <taxon>Fungi</taxon>
        <taxon>Dikarya</taxon>
        <taxon>Ascomycota</taxon>
        <taxon>Saccharomycotina</taxon>
        <taxon>Saccharomycetes</taxon>
        <taxon>Saccharomycetales</taxon>
        <taxon>Saccharomycetaceae</taxon>
        <taxon>Eremothecium</taxon>
    </lineage>
</organism>
<protein>
    <recommendedName>
        <fullName>Pre-mRNA-splicing factor SNT309</fullName>
    </recommendedName>
</protein>
<proteinExistence type="inferred from homology"/>
<reference key="1">
    <citation type="journal article" date="2004" name="Science">
        <title>The Ashbya gossypii genome as a tool for mapping the ancient Saccharomyces cerevisiae genome.</title>
        <authorList>
            <person name="Dietrich F.S."/>
            <person name="Voegeli S."/>
            <person name="Brachat S."/>
            <person name="Lerch A."/>
            <person name="Gates K."/>
            <person name="Steiner S."/>
            <person name="Mohr C."/>
            <person name="Poehlmann R."/>
            <person name="Luedi P."/>
            <person name="Choi S."/>
            <person name="Wing R.A."/>
            <person name="Flavier A."/>
            <person name="Gaffney T.D."/>
            <person name="Philippsen P."/>
        </authorList>
    </citation>
    <scope>NUCLEOTIDE SEQUENCE [LARGE SCALE GENOMIC DNA]</scope>
    <source>
        <strain>ATCC 10895 / CBS 109.51 / FGSC 9923 / NRRL Y-1056</strain>
    </source>
</reference>
<reference key="2">
    <citation type="journal article" date="2013" name="G3 (Bethesda)">
        <title>Genomes of Ashbya fungi isolated from insects reveal four mating-type loci, numerous translocations, lack of transposons, and distinct gene duplications.</title>
        <authorList>
            <person name="Dietrich F.S."/>
            <person name="Voegeli S."/>
            <person name="Kuo S."/>
            <person name="Philippsen P."/>
        </authorList>
    </citation>
    <scope>GENOME REANNOTATION</scope>
    <source>
        <strain>ATCC 10895 / CBS 109.51 / FGSC 9923 / NRRL Y-1056</strain>
    </source>
</reference>
<gene>
    <name type="primary">SNT309</name>
    <name type="ordered locus">AEL324C</name>
</gene>
<name>SN309_EREGS</name>
<evidence type="ECO:0000250" key="1"/>
<accession>Q758S6</accession>
<sequence>MADDVIDWLPYVDTLDQRYLNEVEKTVTAELAAIEQQELHPRIAELFPAVRHHWDEQYGLYKDNVVGLEGSNKRAAEDGVLSELKRRCPGIDISVYNDDSEDPVLLATIAGYRYHQDLVVTQLLPQTLENQWAINNAYLEGAEAAVRRQLQEQEQQIAQLDRHRQELQQREALRFRYLERQWRDRLHGNLERAAGNI</sequence>
<keyword id="KW-0507">mRNA processing</keyword>
<keyword id="KW-0508">mRNA splicing</keyword>
<keyword id="KW-0539">Nucleus</keyword>
<keyword id="KW-1185">Reference proteome</keyword>
<keyword id="KW-0747">Spliceosome</keyword>
<dbReference type="EMBL" id="AE016818">
    <property type="protein sequence ID" value="AAS52360.1"/>
    <property type="molecule type" value="Genomic_DNA"/>
</dbReference>
<dbReference type="RefSeq" id="NP_984536.1">
    <property type="nucleotide sequence ID" value="NM_209889.1"/>
</dbReference>
<dbReference type="SMR" id="Q758S6"/>
<dbReference type="FunCoup" id="Q758S6">
    <property type="interactions" value="158"/>
</dbReference>
<dbReference type="STRING" id="284811.Q758S6"/>
<dbReference type="EnsemblFungi" id="AAS52360">
    <property type="protein sequence ID" value="AAS52360"/>
    <property type="gene ID" value="AGOS_AEL324C"/>
</dbReference>
<dbReference type="GeneID" id="4620706"/>
<dbReference type="KEGG" id="ago:AGOS_AEL324C"/>
<dbReference type="eggNOG" id="ENOG502S9WN">
    <property type="taxonomic scope" value="Eukaryota"/>
</dbReference>
<dbReference type="HOGENOM" id="CLU_119596_0_0_1"/>
<dbReference type="InParanoid" id="Q758S6"/>
<dbReference type="OMA" id="YLRHQEL"/>
<dbReference type="OrthoDB" id="4059443at2759"/>
<dbReference type="Proteomes" id="UP000000591">
    <property type="component" value="Chromosome V"/>
</dbReference>
<dbReference type="GO" id="GO:0005681">
    <property type="term" value="C:spliceosomal complex"/>
    <property type="evidence" value="ECO:0007669"/>
    <property type="project" value="UniProtKB-KW"/>
</dbReference>
<dbReference type="GO" id="GO:0006397">
    <property type="term" value="P:mRNA processing"/>
    <property type="evidence" value="ECO:0007669"/>
    <property type="project" value="UniProtKB-KW"/>
</dbReference>
<dbReference type="GO" id="GO:0008380">
    <property type="term" value="P:RNA splicing"/>
    <property type="evidence" value="ECO:0007669"/>
    <property type="project" value="UniProtKB-KW"/>
</dbReference>
<dbReference type="InterPro" id="IPR008409">
    <property type="entry name" value="SPF27"/>
</dbReference>
<dbReference type="Pfam" id="PF05700">
    <property type="entry name" value="BCAS2"/>
    <property type="match status" value="1"/>
</dbReference>
<feature type="chain" id="PRO_0000071997" description="Pre-mRNA-splicing factor SNT309">
    <location>
        <begin position="1"/>
        <end position="197"/>
    </location>
</feature>